<keyword id="KW-0030">Aminoacyl-tRNA synthetase</keyword>
<keyword id="KW-0067">ATP-binding</keyword>
<keyword id="KW-0963">Cytoplasm</keyword>
<keyword id="KW-0436">Ligase</keyword>
<keyword id="KW-0547">Nucleotide-binding</keyword>
<keyword id="KW-0648">Protein biosynthesis</keyword>
<sequence>MYRFAPSPTGDMHIGNLRAAIFNYICARQKNMDFILRIEDTDKARNIAGKEEEIKEILNLFGISWQHYYIQSENLKFHRQMALKLVSEKKAFACFCTEEELEAKKELAKKQGKAYRYDGTCEKLADIDVLECEKPFVIRLKKPTHTMKFTDFIKGELSFEPENIDSFVIMRTDKTPTYNFACAVDDMLENVTCIIRGEDHVSNTPKQEHIRASLGYNKAMTYAHLPIILNEEGVKMSKREAHSSVKWLLESGILPSAIANYLIMLGNKTPCEIFTLEEAIKWFDISKVSKAPARFDLKKLLQINREHIKMIKDDELNKILDLNKDLAQLAKFYTQEASTIKELKEKMRAIFNTKDFGEFETECKILKELLKDIELFENYEDFKNELLSKSDLKGKKFFMPLRIILTGNIHGPELSDLYPYIKNFIHELARI</sequence>
<accession>A1VZI8</accession>
<proteinExistence type="inferred from homology"/>
<name>SYE1_CAMJJ</name>
<protein>
    <recommendedName>
        <fullName evidence="1">Glutamate--tRNA ligase 1</fullName>
        <ecNumber evidence="1">6.1.1.17</ecNumber>
    </recommendedName>
    <alternativeName>
        <fullName evidence="1">Glutamyl-tRNA synthetase 1</fullName>
        <shortName evidence="1">GluRS 1</shortName>
    </alternativeName>
</protein>
<organism>
    <name type="scientific">Campylobacter jejuni subsp. jejuni serotype O:23/36 (strain 81-176)</name>
    <dbReference type="NCBI Taxonomy" id="354242"/>
    <lineage>
        <taxon>Bacteria</taxon>
        <taxon>Pseudomonadati</taxon>
        <taxon>Campylobacterota</taxon>
        <taxon>Epsilonproteobacteria</taxon>
        <taxon>Campylobacterales</taxon>
        <taxon>Campylobacteraceae</taxon>
        <taxon>Campylobacter</taxon>
    </lineage>
</organism>
<evidence type="ECO:0000255" key="1">
    <source>
        <dbReference type="HAMAP-Rule" id="MF_00022"/>
    </source>
</evidence>
<dbReference type="EC" id="6.1.1.17" evidence="1"/>
<dbReference type="EMBL" id="CP000538">
    <property type="protein sequence ID" value="EAQ72283.1"/>
    <property type="molecule type" value="Genomic_DNA"/>
</dbReference>
<dbReference type="SMR" id="A1VZI8"/>
<dbReference type="KEGG" id="cjj:CJJ81176_0861"/>
<dbReference type="eggNOG" id="COG0008">
    <property type="taxonomic scope" value="Bacteria"/>
</dbReference>
<dbReference type="HOGENOM" id="CLU_015768_6_0_7"/>
<dbReference type="Proteomes" id="UP000000646">
    <property type="component" value="Chromosome"/>
</dbReference>
<dbReference type="GO" id="GO:0005829">
    <property type="term" value="C:cytosol"/>
    <property type="evidence" value="ECO:0007669"/>
    <property type="project" value="TreeGrafter"/>
</dbReference>
<dbReference type="GO" id="GO:0005524">
    <property type="term" value="F:ATP binding"/>
    <property type="evidence" value="ECO:0007669"/>
    <property type="project" value="UniProtKB-UniRule"/>
</dbReference>
<dbReference type="GO" id="GO:0004818">
    <property type="term" value="F:glutamate-tRNA ligase activity"/>
    <property type="evidence" value="ECO:0007669"/>
    <property type="project" value="UniProtKB-UniRule"/>
</dbReference>
<dbReference type="GO" id="GO:0000049">
    <property type="term" value="F:tRNA binding"/>
    <property type="evidence" value="ECO:0007669"/>
    <property type="project" value="InterPro"/>
</dbReference>
<dbReference type="GO" id="GO:0006424">
    <property type="term" value="P:glutamyl-tRNA aminoacylation"/>
    <property type="evidence" value="ECO:0007669"/>
    <property type="project" value="UniProtKB-UniRule"/>
</dbReference>
<dbReference type="Gene3D" id="1.10.10.350">
    <property type="match status" value="1"/>
</dbReference>
<dbReference type="Gene3D" id="3.40.50.620">
    <property type="entry name" value="HUPs"/>
    <property type="match status" value="1"/>
</dbReference>
<dbReference type="HAMAP" id="MF_00022">
    <property type="entry name" value="Glu_tRNA_synth_type1"/>
    <property type="match status" value="1"/>
</dbReference>
<dbReference type="InterPro" id="IPR045462">
    <property type="entry name" value="aa-tRNA-synth_I_cd-bd"/>
</dbReference>
<dbReference type="InterPro" id="IPR020751">
    <property type="entry name" value="aa-tRNA-synth_I_codon-bd_sub2"/>
</dbReference>
<dbReference type="InterPro" id="IPR001412">
    <property type="entry name" value="aa-tRNA-synth_I_CS"/>
</dbReference>
<dbReference type="InterPro" id="IPR008925">
    <property type="entry name" value="aa_tRNA-synth_I_cd-bd_sf"/>
</dbReference>
<dbReference type="InterPro" id="IPR004527">
    <property type="entry name" value="Glu-tRNA-ligase_bac/mito"/>
</dbReference>
<dbReference type="InterPro" id="IPR000924">
    <property type="entry name" value="Glu/Gln-tRNA-synth"/>
</dbReference>
<dbReference type="InterPro" id="IPR020058">
    <property type="entry name" value="Glu/Gln-tRNA-synth_Ib_cat-dom"/>
</dbReference>
<dbReference type="InterPro" id="IPR049940">
    <property type="entry name" value="GluQ/Sye"/>
</dbReference>
<dbReference type="InterPro" id="IPR014729">
    <property type="entry name" value="Rossmann-like_a/b/a_fold"/>
</dbReference>
<dbReference type="NCBIfam" id="TIGR00464">
    <property type="entry name" value="gltX_bact"/>
    <property type="match status" value="1"/>
</dbReference>
<dbReference type="PANTHER" id="PTHR43311">
    <property type="entry name" value="GLUTAMATE--TRNA LIGASE"/>
    <property type="match status" value="1"/>
</dbReference>
<dbReference type="PANTHER" id="PTHR43311:SF2">
    <property type="entry name" value="GLUTAMATE--TRNA LIGASE, MITOCHONDRIAL-RELATED"/>
    <property type="match status" value="1"/>
</dbReference>
<dbReference type="Pfam" id="PF19269">
    <property type="entry name" value="Anticodon_2"/>
    <property type="match status" value="1"/>
</dbReference>
<dbReference type="Pfam" id="PF00749">
    <property type="entry name" value="tRNA-synt_1c"/>
    <property type="match status" value="1"/>
</dbReference>
<dbReference type="PRINTS" id="PR00987">
    <property type="entry name" value="TRNASYNTHGLU"/>
</dbReference>
<dbReference type="SUPFAM" id="SSF48163">
    <property type="entry name" value="An anticodon-binding domain of class I aminoacyl-tRNA synthetases"/>
    <property type="match status" value="1"/>
</dbReference>
<dbReference type="SUPFAM" id="SSF52374">
    <property type="entry name" value="Nucleotidylyl transferase"/>
    <property type="match status" value="1"/>
</dbReference>
<dbReference type="PROSITE" id="PS00178">
    <property type="entry name" value="AA_TRNA_LIGASE_I"/>
    <property type="match status" value="1"/>
</dbReference>
<feature type="chain" id="PRO_0000367640" description="Glutamate--tRNA ligase 1">
    <location>
        <begin position="1"/>
        <end position="431"/>
    </location>
</feature>
<feature type="short sequence motif" description="'HIGH' region" evidence="1">
    <location>
        <begin position="6"/>
        <end position="16"/>
    </location>
</feature>
<feature type="short sequence motif" description="'KMSKS' region" evidence="1">
    <location>
        <begin position="235"/>
        <end position="239"/>
    </location>
</feature>
<feature type="binding site" evidence="1">
    <location>
        <position position="238"/>
    </location>
    <ligand>
        <name>ATP</name>
        <dbReference type="ChEBI" id="CHEBI:30616"/>
    </ligand>
</feature>
<reference key="1">
    <citation type="submission" date="2006-12" db="EMBL/GenBank/DDBJ databases">
        <authorList>
            <person name="Fouts D.E."/>
            <person name="Nelson K.E."/>
            <person name="Sebastian Y."/>
        </authorList>
    </citation>
    <scope>NUCLEOTIDE SEQUENCE [LARGE SCALE GENOMIC DNA]</scope>
    <source>
        <strain>81-176</strain>
    </source>
</reference>
<gene>
    <name evidence="1" type="primary">gltX1</name>
    <name type="ordered locus">CJJ81176_0861</name>
</gene>
<comment type="function">
    <text evidence="1">Catalyzes the attachment of glutamate to tRNA(Glu) in a two-step reaction: glutamate is first activated by ATP to form Glu-AMP and then transferred to the acceptor end of tRNA(Glu).</text>
</comment>
<comment type="catalytic activity">
    <reaction evidence="1">
        <text>tRNA(Glu) + L-glutamate + ATP = L-glutamyl-tRNA(Glu) + AMP + diphosphate</text>
        <dbReference type="Rhea" id="RHEA:23540"/>
        <dbReference type="Rhea" id="RHEA-COMP:9663"/>
        <dbReference type="Rhea" id="RHEA-COMP:9680"/>
        <dbReference type="ChEBI" id="CHEBI:29985"/>
        <dbReference type="ChEBI" id="CHEBI:30616"/>
        <dbReference type="ChEBI" id="CHEBI:33019"/>
        <dbReference type="ChEBI" id="CHEBI:78442"/>
        <dbReference type="ChEBI" id="CHEBI:78520"/>
        <dbReference type="ChEBI" id="CHEBI:456215"/>
        <dbReference type="EC" id="6.1.1.17"/>
    </reaction>
</comment>
<comment type="subunit">
    <text evidence="1">Monomer.</text>
</comment>
<comment type="subcellular location">
    <subcellularLocation>
        <location evidence="1">Cytoplasm</location>
    </subcellularLocation>
</comment>
<comment type="similarity">
    <text evidence="1">Belongs to the class-I aminoacyl-tRNA synthetase family. Glutamate--tRNA ligase type 1 subfamily.</text>
</comment>